<gene>
    <name type="primary">xylA1</name>
    <name type="ordered locus">XCC1758</name>
</gene>
<evidence type="ECO:0000250" key="1"/>
<evidence type="ECO:0000305" key="2"/>
<accession>Q8P9T9</accession>
<dbReference type="EC" id="5.3.1.5"/>
<dbReference type="EMBL" id="AE008922">
    <property type="protein sequence ID" value="AAM41049.1"/>
    <property type="molecule type" value="Genomic_DNA"/>
</dbReference>
<dbReference type="RefSeq" id="NP_637125.1">
    <property type="nucleotide sequence ID" value="NC_003902.1"/>
</dbReference>
<dbReference type="SMR" id="Q8P9T9"/>
<dbReference type="STRING" id="190485.XCC1758"/>
<dbReference type="EnsemblBacteria" id="AAM41049">
    <property type="protein sequence ID" value="AAM41049"/>
    <property type="gene ID" value="XCC1758"/>
</dbReference>
<dbReference type="KEGG" id="xcc:XCC1758"/>
<dbReference type="PATRIC" id="fig|190485.4.peg.1874"/>
<dbReference type="eggNOG" id="COG2115">
    <property type="taxonomic scope" value="Bacteria"/>
</dbReference>
<dbReference type="HOGENOM" id="CLU_037261_1_0_6"/>
<dbReference type="OrthoDB" id="9763981at2"/>
<dbReference type="Proteomes" id="UP000001010">
    <property type="component" value="Chromosome"/>
</dbReference>
<dbReference type="GO" id="GO:0005737">
    <property type="term" value="C:cytoplasm"/>
    <property type="evidence" value="ECO:0007669"/>
    <property type="project" value="UniProtKB-SubCell"/>
</dbReference>
<dbReference type="GO" id="GO:0000287">
    <property type="term" value="F:magnesium ion binding"/>
    <property type="evidence" value="ECO:0007669"/>
    <property type="project" value="UniProtKB-UniRule"/>
</dbReference>
<dbReference type="GO" id="GO:0009045">
    <property type="term" value="F:xylose isomerase activity"/>
    <property type="evidence" value="ECO:0000318"/>
    <property type="project" value="GO_Central"/>
</dbReference>
<dbReference type="GO" id="GO:0042843">
    <property type="term" value="P:D-xylose catabolic process"/>
    <property type="evidence" value="ECO:0000318"/>
    <property type="project" value="GO_Central"/>
</dbReference>
<dbReference type="FunFam" id="3.20.20.150:FF:000002">
    <property type="entry name" value="Xylose isomerase"/>
    <property type="match status" value="1"/>
</dbReference>
<dbReference type="Gene3D" id="3.20.20.150">
    <property type="entry name" value="Divalent-metal-dependent TIM barrel enzymes"/>
    <property type="match status" value="1"/>
</dbReference>
<dbReference type="HAMAP" id="MF_00455">
    <property type="entry name" value="Xylose_isom_A"/>
    <property type="match status" value="1"/>
</dbReference>
<dbReference type="InterPro" id="IPR036237">
    <property type="entry name" value="Xyl_isomerase-like_sf"/>
</dbReference>
<dbReference type="InterPro" id="IPR013452">
    <property type="entry name" value="Xylose_isom_bac"/>
</dbReference>
<dbReference type="InterPro" id="IPR001998">
    <property type="entry name" value="Xylose_isomerase"/>
</dbReference>
<dbReference type="NCBIfam" id="NF003998">
    <property type="entry name" value="PRK05474.1"/>
    <property type="match status" value="1"/>
</dbReference>
<dbReference type="NCBIfam" id="NF009115">
    <property type="entry name" value="PRK12465.1"/>
    <property type="match status" value="1"/>
</dbReference>
<dbReference type="NCBIfam" id="TIGR02630">
    <property type="entry name" value="xylose_isom_A"/>
    <property type="match status" value="1"/>
</dbReference>
<dbReference type="PANTHER" id="PTHR48408">
    <property type="match status" value="1"/>
</dbReference>
<dbReference type="PANTHER" id="PTHR48408:SF1">
    <property type="entry name" value="XYLOSE ISOMERASE"/>
    <property type="match status" value="1"/>
</dbReference>
<dbReference type="PRINTS" id="PR00688">
    <property type="entry name" value="XYLOSISMRASE"/>
</dbReference>
<dbReference type="SUPFAM" id="SSF51658">
    <property type="entry name" value="Xylose isomerase-like"/>
    <property type="match status" value="1"/>
</dbReference>
<dbReference type="PROSITE" id="PS51415">
    <property type="entry name" value="XYLOSE_ISOMERASE"/>
    <property type="match status" value="1"/>
</dbReference>
<feature type="chain" id="PRO_0000195821" description="Xylose isomerase 1">
    <location>
        <begin position="1"/>
        <end position="446"/>
    </location>
</feature>
<feature type="active site" evidence="1">
    <location>
        <position position="109"/>
    </location>
</feature>
<feature type="active site" evidence="1">
    <location>
        <position position="112"/>
    </location>
</feature>
<feature type="binding site" evidence="1">
    <location>
        <position position="240"/>
    </location>
    <ligand>
        <name>Mg(2+)</name>
        <dbReference type="ChEBI" id="CHEBI:18420"/>
        <label>1</label>
    </ligand>
</feature>
<feature type="binding site" evidence="1">
    <location>
        <position position="276"/>
    </location>
    <ligand>
        <name>Mg(2+)</name>
        <dbReference type="ChEBI" id="CHEBI:18420"/>
        <label>1</label>
    </ligand>
</feature>
<feature type="binding site" evidence="1">
    <location>
        <position position="276"/>
    </location>
    <ligand>
        <name>Mg(2+)</name>
        <dbReference type="ChEBI" id="CHEBI:18420"/>
        <label>2</label>
    </ligand>
</feature>
<feature type="binding site" evidence="1">
    <location>
        <position position="279"/>
    </location>
    <ligand>
        <name>Mg(2+)</name>
        <dbReference type="ChEBI" id="CHEBI:18420"/>
        <label>2</label>
    </ligand>
</feature>
<feature type="binding site" evidence="1">
    <location>
        <position position="304"/>
    </location>
    <ligand>
        <name>Mg(2+)</name>
        <dbReference type="ChEBI" id="CHEBI:18420"/>
        <label>1</label>
    </ligand>
</feature>
<feature type="binding site" evidence="1">
    <location>
        <position position="315"/>
    </location>
    <ligand>
        <name>Mg(2+)</name>
        <dbReference type="ChEBI" id="CHEBI:18420"/>
        <label>2</label>
    </ligand>
</feature>
<feature type="binding site" evidence="1">
    <location>
        <position position="317"/>
    </location>
    <ligand>
        <name>Mg(2+)</name>
        <dbReference type="ChEBI" id="CHEBI:18420"/>
        <label>2</label>
    </ligand>
</feature>
<feature type="binding site" evidence="1">
    <location>
        <position position="347"/>
    </location>
    <ligand>
        <name>Mg(2+)</name>
        <dbReference type="ChEBI" id="CHEBI:18420"/>
        <label>1</label>
    </ligand>
</feature>
<name>XYLA1_XANCP</name>
<sequence>MSNTVFIGAKEYFPGIGKIGFEGRDSDNPLAFKVYDANKQVAGKSMAEHLRFAVAYWHSFCGNGADPFGPGTRAYPWDVGNTALARAEAKSDAAFEFFTKLGVPYYCFHDIDLAPDADDIGEYENNLKHMVRIAKQRQADTGVKLLWGTANLFSHPRYMNGASTNPDFNVVARAAVQVKAAIDATVELGGENYVFWGGREGYACLHNTQMKREQDNMARFLTLARDYGRAIGFTGNFLIEPKPMEPMKHQYDFDSATVIGFLHQHGLDQDFKLNIEANHATLSGHSFEHDLQVASDAGLLGSIDANRGNPQNGWDTDQFPTDLYDTVGAMLVVLRQGGLAPGGLNFDAKVRRESSDPQDLFLAHIGGMDAFARGLEVADALLTSSPLETWRAQRYASFDSGAGADFANGTSTLADLAKYAAGRGEPTQVSGRQEAYENLINQYLTR</sequence>
<proteinExistence type="inferred from homology"/>
<organism>
    <name type="scientific">Xanthomonas campestris pv. campestris (strain ATCC 33913 / DSM 3586 / NCPPB 528 / LMG 568 / P 25)</name>
    <dbReference type="NCBI Taxonomy" id="190485"/>
    <lineage>
        <taxon>Bacteria</taxon>
        <taxon>Pseudomonadati</taxon>
        <taxon>Pseudomonadota</taxon>
        <taxon>Gammaproteobacteria</taxon>
        <taxon>Lysobacterales</taxon>
        <taxon>Lysobacteraceae</taxon>
        <taxon>Xanthomonas</taxon>
    </lineage>
</organism>
<reference key="1">
    <citation type="journal article" date="2002" name="Nature">
        <title>Comparison of the genomes of two Xanthomonas pathogens with differing host specificities.</title>
        <authorList>
            <person name="da Silva A.C.R."/>
            <person name="Ferro J.A."/>
            <person name="Reinach F.C."/>
            <person name="Farah C.S."/>
            <person name="Furlan L.R."/>
            <person name="Quaggio R.B."/>
            <person name="Monteiro-Vitorello C.B."/>
            <person name="Van Sluys M.A."/>
            <person name="Almeida N.F. Jr."/>
            <person name="Alves L.M.C."/>
            <person name="do Amaral A.M."/>
            <person name="Bertolini M.C."/>
            <person name="Camargo L.E.A."/>
            <person name="Camarotte G."/>
            <person name="Cannavan F."/>
            <person name="Cardozo J."/>
            <person name="Chambergo F."/>
            <person name="Ciapina L.P."/>
            <person name="Cicarelli R.M.B."/>
            <person name="Coutinho L.L."/>
            <person name="Cursino-Santos J.R."/>
            <person name="El-Dorry H."/>
            <person name="Faria J.B."/>
            <person name="Ferreira A.J.S."/>
            <person name="Ferreira R.C.C."/>
            <person name="Ferro M.I.T."/>
            <person name="Formighieri E.F."/>
            <person name="Franco M.C."/>
            <person name="Greggio C.C."/>
            <person name="Gruber A."/>
            <person name="Katsuyama A.M."/>
            <person name="Kishi L.T."/>
            <person name="Leite R.P."/>
            <person name="Lemos E.G.M."/>
            <person name="Lemos M.V.F."/>
            <person name="Locali E.C."/>
            <person name="Machado M.A."/>
            <person name="Madeira A.M.B.N."/>
            <person name="Martinez-Rossi N.M."/>
            <person name="Martins E.C."/>
            <person name="Meidanis J."/>
            <person name="Menck C.F.M."/>
            <person name="Miyaki C.Y."/>
            <person name="Moon D.H."/>
            <person name="Moreira L.M."/>
            <person name="Novo M.T.M."/>
            <person name="Okura V.K."/>
            <person name="Oliveira M.C."/>
            <person name="Oliveira V.R."/>
            <person name="Pereira H.A."/>
            <person name="Rossi A."/>
            <person name="Sena J.A.D."/>
            <person name="Silva C."/>
            <person name="de Souza R.F."/>
            <person name="Spinola L.A.F."/>
            <person name="Takita M.A."/>
            <person name="Tamura R.E."/>
            <person name="Teixeira E.C."/>
            <person name="Tezza R.I.D."/>
            <person name="Trindade dos Santos M."/>
            <person name="Truffi D."/>
            <person name="Tsai S.M."/>
            <person name="White F.F."/>
            <person name="Setubal J.C."/>
            <person name="Kitajima J.P."/>
        </authorList>
    </citation>
    <scope>NUCLEOTIDE SEQUENCE [LARGE SCALE GENOMIC DNA]</scope>
    <source>
        <strain>ATCC 33913 / DSM 3586 / NCPPB 528 / LMG 568 / P 25</strain>
    </source>
</reference>
<keyword id="KW-0119">Carbohydrate metabolism</keyword>
<keyword id="KW-0963">Cytoplasm</keyword>
<keyword id="KW-0413">Isomerase</keyword>
<keyword id="KW-0460">Magnesium</keyword>
<keyword id="KW-0479">Metal-binding</keyword>
<keyword id="KW-1185">Reference proteome</keyword>
<keyword id="KW-0859">Xylose metabolism</keyword>
<comment type="catalytic activity">
    <reaction>
        <text>alpha-D-xylose = alpha-D-xylulofuranose</text>
        <dbReference type="Rhea" id="RHEA:22816"/>
        <dbReference type="ChEBI" id="CHEBI:28518"/>
        <dbReference type="ChEBI" id="CHEBI:188998"/>
        <dbReference type="EC" id="5.3.1.5"/>
    </reaction>
</comment>
<comment type="cofactor">
    <cofactor evidence="1">
        <name>Mg(2+)</name>
        <dbReference type="ChEBI" id="CHEBI:18420"/>
    </cofactor>
    <text evidence="1">Binds 2 magnesium ions per subunit.</text>
</comment>
<comment type="subunit">
    <text evidence="1">Homotetramer.</text>
</comment>
<comment type="subcellular location">
    <subcellularLocation>
        <location evidence="1">Cytoplasm</location>
    </subcellularLocation>
</comment>
<comment type="similarity">
    <text evidence="2">Belongs to the xylose isomerase family.</text>
</comment>
<protein>
    <recommendedName>
        <fullName>Xylose isomerase 1</fullName>
        <ecNumber>5.3.1.5</ecNumber>
    </recommendedName>
</protein>